<feature type="chain" id="PRO_0000143929" description="Uridylate kinase">
    <location>
        <begin position="1"/>
        <end position="229"/>
    </location>
</feature>
<feature type="binding site" evidence="1">
    <location>
        <begin position="11"/>
        <end position="12"/>
    </location>
    <ligand>
        <name>ATP</name>
        <dbReference type="ChEBI" id="CHEBI:30616"/>
    </ligand>
</feature>
<feature type="binding site" evidence="1">
    <location>
        <position position="45"/>
    </location>
    <ligand>
        <name>UMP</name>
        <dbReference type="ChEBI" id="CHEBI:57865"/>
    </ligand>
</feature>
<feature type="binding site" evidence="1">
    <location>
        <position position="46"/>
    </location>
    <ligand>
        <name>ATP</name>
        <dbReference type="ChEBI" id="CHEBI:30616"/>
    </ligand>
</feature>
<feature type="binding site" evidence="1">
    <location>
        <position position="50"/>
    </location>
    <ligand>
        <name>ATP</name>
        <dbReference type="ChEBI" id="CHEBI:30616"/>
    </ligand>
</feature>
<feature type="binding site" evidence="1">
    <location>
        <position position="67"/>
    </location>
    <ligand>
        <name>UMP</name>
        <dbReference type="ChEBI" id="CHEBI:57865"/>
    </ligand>
</feature>
<feature type="binding site" evidence="1">
    <location>
        <begin position="114"/>
        <end position="120"/>
    </location>
    <ligand>
        <name>UMP</name>
        <dbReference type="ChEBI" id="CHEBI:57865"/>
    </ligand>
</feature>
<feature type="binding site" evidence="1">
    <location>
        <position position="140"/>
    </location>
    <ligand>
        <name>ATP</name>
        <dbReference type="ChEBI" id="CHEBI:30616"/>
    </ligand>
</feature>
<feature type="binding site" evidence="1">
    <location>
        <position position="146"/>
    </location>
    <ligand>
        <name>ATP</name>
        <dbReference type="ChEBI" id="CHEBI:30616"/>
    </ligand>
</feature>
<feature type="binding site" evidence="1">
    <location>
        <position position="149"/>
    </location>
    <ligand>
        <name>ATP</name>
        <dbReference type="ChEBI" id="CHEBI:30616"/>
    </ligand>
</feature>
<proteinExistence type="inferred from homology"/>
<keyword id="KW-0067">ATP-binding</keyword>
<keyword id="KW-0963">Cytoplasm</keyword>
<keyword id="KW-0418">Kinase</keyword>
<keyword id="KW-0547">Nucleotide-binding</keyword>
<keyword id="KW-0665">Pyrimidine biosynthesis</keyword>
<keyword id="KW-1185">Reference proteome</keyword>
<keyword id="KW-0808">Transferase</keyword>
<accession>Q9HKV7</accession>
<name>PYRH_THEAC</name>
<protein>
    <recommendedName>
        <fullName evidence="1">Uridylate kinase</fullName>
        <shortName evidence="1">UK</shortName>
        <ecNumber evidence="1">2.7.4.22</ecNumber>
    </recommendedName>
    <alternativeName>
        <fullName evidence="1">Uridine monophosphate kinase</fullName>
        <shortName evidence="1">UMP kinase</shortName>
        <shortName evidence="1">UMPK</shortName>
    </alternativeName>
</protein>
<evidence type="ECO:0000255" key="1">
    <source>
        <dbReference type="HAMAP-Rule" id="MF_01220"/>
    </source>
</evidence>
<organism>
    <name type="scientific">Thermoplasma acidophilum (strain ATCC 25905 / DSM 1728 / JCM 9062 / NBRC 15155 / AMRC-C165)</name>
    <dbReference type="NCBI Taxonomy" id="273075"/>
    <lineage>
        <taxon>Archaea</taxon>
        <taxon>Methanobacteriati</taxon>
        <taxon>Thermoplasmatota</taxon>
        <taxon>Thermoplasmata</taxon>
        <taxon>Thermoplasmatales</taxon>
        <taxon>Thermoplasmataceae</taxon>
        <taxon>Thermoplasma</taxon>
    </lineage>
</organism>
<comment type="function">
    <text evidence="1">Catalyzes the reversible phosphorylation of UMP to UDP.</text>
</comment>
<comment type="catalytic activity">
    <reaction evidence="1">
        <text>UMP + ATP = UDP + ADP</text>
        <dbReference type="Rhea" id="RHEA:24400"/>
        <dbReference type="ChEBI" id="CHEBI:30616"/>
        <dbReference type="ChEBI" id="CHEBI:57865"/>
        <dbReference type="ChEBI" id="CHEBI:58223"/>
        <dbReference type="ChEBI" id="CHEBI:456216"/>
        <dbReference type="EC" id="2.7.4.22"/>
    </reaction>
</comment>
<comment type="activity regulation">
    <text evidence="1">Inhibited by UTP.</text>
</comment>
<comment type="pathway">
    <text evidence="1">Pyrimidine metabolism; CTP biosynthesis via de novo pathway; UDP from UMP (UMPK route): step 1/1.</text>
</comment>
<comment type="subunit">
    <text evidence="1">Homohexamer.</text>
</comment>
<comment type="subcellular location">
    <subcellularLocation>
        <location evidence="1">Cytoplasm</location>
    </subcellularLocation>
</comment>
<comment type="similarity">
    <text evidence="1">Belongs to the UMP kinase family.</text>
</comment>
<gene>
    <name evidence="1" type="primary">pyrH</name>
    <name type="ordered locus">Ta0486</name>
</gene>
<reference key="1">
    <citation type="journal article" date="2000" name="Nature">
        <title>The genome sequence of the thermoacidophilic scavenger Thermoplasma acidophilum.</title>
        <authorList>
            <person name="Ruepp A."/>
            <person name="Graml W."/>
            <person name="Santos-Martinez M.-L."/>
            <person name="Koretke K.K."/>
            <person name="Volker C."/>
            <person name="Mewes H.-W."/>
            <person name="Frishman D."/>
            <person name="Stocker S."/>
            <person name="Lupas A.N."/>
            <person name="Baumeister W."/>
        </authorList>
    </citation>
    <scope>NUCLEOTIDE SEQUENCE [LARGE SCALE GENOMIC DNA]</scope>
    <source>
        <strain>ATCC 25905 / DSM 1728 / JCM 9062 / NBRC 15155 / AMRC-C165</strain>
    </source>
</reference>
<dbReference type="EC" id="2.7.4.22" evidence="1"/>
<dbReference type="EMBL" id="AL445064">
    <property type="protein sequence ID" value="CAC11628.1"/>
    <property type="molecule type" value="Genomic_DNA"/>
</dbReference>
<dbReference type="RefSeq" id="WP_010900913.1">
    <property type="nucleotide sequence ID" value="NC_002578.1"/>
</dbReference>
<dbReference type="SMR" id="Q9HKV7"/>
<dbReference type="FunCoup" id="Q9HKV7">
    <property type="interactions" value="87"/>
</dbReference>
<dbReference type="STRING" id="273075.gene:9571706"/>
<dbReference type="PaxDb" id="273075-Ta0486"/>
<dbReference type="DNASU" id="1456091"/>
<dbReference type="EnsemblBacteria" id="CAC11628">
    <property type="protein sequence ID" value="CAC11628"/>
    <property type="gene ID" value="CAC11628"/>
</dbReference>
<dbReference type="KEGG" id="tac:Ta0486"/>
<dbReference type="eggNOG" id="arCOG00858">
    <property type="taxonomic scope" value="Archaea"/>
</dbReference>
<dbReference type="HOGENOM" id="CLU_079546_0_0_2"/>
<dbReference type="InParanoid" id="Q9HKV7"/>
<dbReference type="OrthoDB" id="372251at2157"/>
<dbReference type="UniPathway" id="UPA00159">
    <property type="reaction ID" value="UER00275"/>
</dbReference>
<dbReference type="Proteomes" id="UP000001024">
    <property type="component" value="Chromosome"/>
</dbReference>
<dbReference type="GO" id="GO:0005737">
    <property type="term" value="C:cytoplasm"/>
    <property type="evidence" value="ECO:0007669"/>
    <property type="project" value="UniProtKB-SubCell"/>
</dbReference>
<dbReference type="GO" id="GO:0005524">
    <property type="term" value="F:ATP binding"/>
    <property type="evidence" value="ECO:0007669"/>
    <property type="project" value="UniProtKB-KW"/>
</dbReference>
<dbReference type="GO" id="GO:0033862">
    <property type="term" value="F:UMP kinase activity"/>
    <property type="evidence" value="ECO:0007669"/>
    <property type="project" value="UniProtKB-EC"/>
</dbReference>
<dbReference type="GO" id="GO:0044210">
    <property type="term" value="P:'de novo' CTP biosynthetic process"/>
    <property type="evidence" value="ECO:0007669"/>
    <property type="project" value="UniProtKB-UniRule"/>
</dbReference>
<dbReference type="GO" id="GO:0006225">
    <property type="term" value="P:UDP biosynthetic process"/>
    <property type="evidence" value="ECO:0007669"/>
    <property type="project" value="TreeGrafter"/>
</dbReference>
<dbReference type="CDD" id="cd04253">
    <property type="entry name" value="AAK_UMPK-PyrH-Pf"/>
    <property type="match status" value="1"/>
</dbReference>
<dbReference type="Gene3D" id="3.40.1160.10">
    <property type="entry name" value="Acetylglutamate kinase-like"/>
    <property type="match status" value="1"/>
</dbReference>
<dbReference type="HAMAP" id="MF_01220_A">
    <property type="entry name" value="PyrH_A"/>
    <property type="match status" value="1"/>
</dbReference>
<dbReference type="InterPro" id="IPR036393">
    <property type="entry name" value="AceGlu_kinase-like_sf"/>
</dbReference>
<dbReference type="InterPro" id="IPR001048">
    <property type="entry name" value="Asp/Glu/Uridylate_kinase"/>
</dbReference>
<dbReference type="InterPro" id="IPR011817">
    <property type="entry name" value="Uridylate_kinase"/>
</dbReference>
<dbReference type="InterPro" id="IPR011818">
    <property type="entry name" value="Uridylate_kinase_arch/spir"/>
</dbReference>
<dbReference type="NCBIfam" id="TIGR02076">
    <property type="entry name" value="pyrH_arch"/>
    <property type="match status" value="1"/>
</dbReference>
<dbReference type="PANTHER" id="PTHR42833">
    <property type="entry name" value="URIDYLATE KINASE"/>
    <property type="match status" value="1"/>
</dbReference>
<dbReference type="PANTHER" id="PTHR42833:SF4">
    <property type="entry name" value="URIDYLATE KINASE PUMPKIN, CHLOROPLASTIC"/>
    <property type="match status" value="1"/>
</dbReference>
<dbReference type="Pfam" id="PF00696">
    <property type="entry name" value="AA_kinase"/>
    <property type="match status" value="1"/>
</dbReference>
<dbReference type="PIRSF" id="PIRSF005650">
    <property type="entry name" value="Uridylate_kin"/>
    <property type="match status" value="1"/>
</dbReference>
<dbReference type="SUPFAM" id="SSF53633">
    <property type="entry name" value="Carbamate kinase-like"/>
    <property type="match status" value="1"/>
</dbReference>
<sequence length="229" mass="24976">MNESIVISLGGSVISGDPIDADYMKSFARILEASKYRRVGIVTGGGRTARSYISVLRKLNVNENVLDEIGIYATRMNALSMASLIPGSNPTIPFTVEDAVNLMNTYRFVVMGGTEPGHTTDTVAALLCERSATRTLINVTSVDGVYDMDPHRFANAKRFDRIGYREAIALSTKSSAGAGPNVFMDITALTIAMRSRIRVIVTSRDIDNLEKILKGDRAVSTFIDDDQRS</sequence>